<feature type="chain" id="PRO_1000057339" description="UPF0102 protein YpsIP31758_0474">
    <location>
        <begin position="1"/>
        <end position="117"/>
    </location>
</feature>
<proteinExistence type="inferred from homology"/>
<reference key="1">
    <citation type="journal article" date="2007" name="PLoS Genet.">
        <title>The complete genome sequence of Yersinia pseudotuberculosis IP31758, the causative agent of Far East scarlet-like fever.</title>
        <authorList>
            <person name="Eppinger M."/>
            <person name="Rosovitz M.J."/>
            <person name="Fricke W.F."/>
            <person name="Rasko D.A."/>
            <person name="Kokorina G."/>
            <person name="Fayolle C."/>
            <person name="Lindler L.E."/>
            <person name="Carniel E."/>
            <person name="Ravel J."/>
        </authorList>
    </citation>
    <scope>NUCLEOTIDE SEQUENCE [LARGE SCALE GENOMIC DNA]</scope>
    <source>
        <strain>IP 31758</strain>
    </source>
</reference>
<dbReference type="EMBL" id="CP000720">
    <property type="protein sequence ID" value="ABS48505.1"/>
    <property type="molecule type" value="Genomic_DNA"/>
</dbReference>
<dbReference type="RefSeq" id="WP_002210147.1">
    <property type="nucleotide sequence ID" value="NC_009708.1"/>
</dbReference>
<dbReference type="SMR" id="A7FDY9"/>
<dbReference type="KEGG" id="ypi:YpsIP31758_0474"/>
<dbReference type="HOGENOM" id="CLU_115353_1_0_6"/>
<dbReference type="Proteomes" id="UP000002412">
    <property type="component" value="Chromosome"/>
</dbReference>
<dbReference type="GO" id="GO:0003676">
    <property type="term" value="F:nucleic acid binding"/>
    <property type="evidence" value="ECO:0007669"/>
    <property type="project" value="InterPro"/>
</dbReference>
<dbReference type="CDD" id="cd20736">
    <property type="entry name" value="PoNe_Nuclease"/>
    <property type="match status" value="1"/>
</dbReference>
<dbReference type="Gene3D" id="3.40.1350.10">
    <property type="match status" value="1"/>
</dbReference>
<dbReference type="HAMAP" id="MF_00048">
    <property type="entry name" value="UPF0102"/>
    <property type="match status" value="1"/>
</dbReference>
<dbReference type="InterPro" id="IPR011335">
    <property type="entry name" value="Restrct_endonuc-II-like"/>
</dbReference>
<dbReference type="InterPro" id="IPR011856">
    <property type="entry name" value="tRNA_endonuc-like_dom_sf"/>
</dbReference>
<dbReference type="InterPro" id="IPR003509">
    <property type="entry name" value="UPF0102_YraN-like"/>
</dbReference>
<dbReference type="NCBIfam" id="NF009150">
    <property type="entry name" value="PRK12497.1-3"/>
    <property type="match status" value="1"/>
</dbReference>
<dbReference type="NCBIfam" id="TIGR00252">
    <property type="entry name" value="YraN family protein"/>
    <property type="match status" value="1"/>
</dbReference>
<dbReference type="PANTHER" id="PTHR34039">
    <property type="entry name" value="UPF0102 PROTEIN YRAN"/>
    <property type="match status" value="1"/>
</dbReference>
<dbReference type="PANTHER" id="PTHR34039:SF1">
    <property type="entry name" value="UPF0102 PROTEIN YRAN"/>
    <property type="match status" value="1"/>
</dbReference>
<dbReference type="Pfam" id="PF02021">
    <property type="entry name" value="UPF0102"/>
    <property type="match status" value="1"/>
</dbReference>
<dbReference type="SUPFAM" id="SSF52980">
    <property type="entry name" value="Restriction endonuclease-like"/>
    <property type="match status" value="1"/>
</dbReference>
<gene>
    <name type="ordered locus">YpsIP31758_0474</name>
</gene>
<accession>A7FDY9</accession>
<protein>
    <recommendedName>
        <fullName evidence="1">UPF0102 protein YpsIP31758_0474</fullName>
    </recommendedName>
</protein>
<name>Y474_YERP3</name>
<comment type="similarity">
    <text evidence="1">Belongs to the UPF0102 family.</text>
</comment>
<organism>
    <name type="scientific">Yersinia pseudotuberculosis serotype O:1b (strain IP 31758)</name>
    <dbReference type="NCBI Taxonomy" id="349747"/>
    <lineage>
        <taxon>Bacteria</taxon>
        <taxon>Pseudomonadati</taxon>
        <taxon>Pseudomonadota</taxon>
        <taxon>Gammaproteobacteria</taxon>
        <taxon>Enterobacterales</taxon>
        <taxon>Yersiniaceae</taxon>
        <taxon>Yersinia</taxon>
    </lineage>
</organism>
<evidence type="ECO:0000255" key="1">
    <source>
        <dbReference type="HAMAP-Rule" id="MF_00048"/>
    </source>
</evidence>
<sequence>MSQRDTGAHYENLARRHLERAGLVFQAANVAFRGGEIDLIMRDGDAWVFVEVRFRRNDLFGGAAASITPRKQQRLHLAAAVWLAQRGASFATTSCRFDVVAITGNQLEWLPNAFNTD</sequence>